<name>DAPA_CLOPE</name>
<proteinExistence type="inferred from homology"/>
<keyword id="KW-0028">Amino-acid biosynthesis</keyword>
<keyword id="KW-0963">Cytoplasm</keyword>
<keyword id="KW-0220">Diaminopimelate biosynthesis</keyword>
<keyword id="KW-0456">Lyase</keyword>
<keyword id="KW-0457">Lysine biosynthesis</keyword>
<keyword id="KW-1185">Reference proteome</keyword>
<keyword id="KW-0704">Schiff base</keyword>
<sequence>MFKGSCVALITPFTEDGVNYEELRKLLEWHIKNHTDAILVCGTTGEGSTMTLEEKKEVIKFSVEVVNKRVPVIAGTGTNNTKASIELSKYAEEVGADMVLIITPYYNKTSQKGLYAHFSAINDAINIPIMLYNVPSRTGMNITPLMLDKLADLNNVVAIKEASGDLSQVAKMAELCGDRIAIYSGNDDQIVPILSLGGAGVVSVLANILPEETHNICEKYFLGEVIESRNLQLKYLSLANSLFIETNPIPVKTAMNLMNFNCGPLRLPLCEMEDSNLIILEENLKANGLIK</sequence>
<protein>
    <recommendedName>
        <fullName evidence="1">4-hydroxy-tetrahydrodipicolinate synthase</fullName>
        <shortName evidence="1">HTPA synthase</shortName>
        <ecNumber evidence="1">4.3.3.7</ecNumber>
    </recommendedName>
</protein>
<gene>
    <name evidence="1" type="primary">dapA</name>
    <name type="ordered locus">CPE1905</name>
</gene>
<accession>Q8XJ56</accession>
<organism>
    <name type="scientific">Clostridium perfringens (strain 13 / Type A)</name>
    <dbReference type="NCBI Taxonomy" id="195102"/>
    <lineage>
        <taxon>Bacteria</taxon>
        <taxon>Bacillati</taxon>
        <taxon>Bacillota</taxon>
        <taxon>Clostridia</taxon>
        <taxon>Eubacteriales</taxon>
        <taxon>Clostridiaceae</taxon>
        <taxon>Clostridium</taxon>
    </lineage>
</organism>
<dbReference type="EC" id="4.3.3.7" evidence="1"/>
<dbReference type="EMBL" id="BA000016">
    <property type="protein sequence ID" value="BAB81611.1"/>
    <property type="molecule type" value="Genomic_DNA"/>
</dbReference>
<dbReference type="RefSeq" id="WP_011010670.1">
    <property type="nucleotide sequence ID" value="NC_003366.1"/>
</dbReference>
<dbReference type="SMR" id="Q8XJ56"/>
<dbReference type="STRING" id="195102.gene:10491174"/>
<dbReference type="KEGG" id="cpe:CPE1905"/>
<dbReference type="HOGENOM" id="CLU_049343_7_1_9"/>
<dbReference type="UniPathway" id="UPA00034">
    <property type="reaction ID" value="UER00017"/>
</dbReference>
<dbReference type="Proteomes" id="UP000000818">
    <property type="component" value="Chromosome"/>
</dbReference>
<dbReference type="GO" id="GO:0005829">
    <property type="term" value="C:cytosol"/>
    <property type="evidence" value="ECO:0007669"/>
    <property type="project" value="TreeGrafter"/>
</dbReference>
<dbReference type="GO" id="GO:0008840">
    <property type="term" value="F:4-hydroxy-tetrahydrodipicolinate synthase activity"/>
    <property type="evidence" value="ECO:0007669"/>
    <property type="project" value="UniProtKB-UniRule"/>
</dbReference>
<dbReference type="GO" id="GO:0019877">
    <property type="term" value="P:diaminopimelate biosynthetic process"/>
    <property type="evidence" value="ECO:0007669"/>
    <property type="project" value="UniProtKB-UniRule"/>
</dbReference>
<dbReference type="GO" id="GO:0009089">
    <property type="term" value="P:lysine biosynthetic process via diaminopimelate"/>
    <property type="evidence" value="ECO:0007669"/>
    <property type="project" value="UniProtKB-UniRule"/>
</dbReference>
<dbReference type="CDD" id="cd00950">
    <property type="entry name" value="DHDPS"/>
    <property type="match status" value="1"/>
</dbReference>
<dbReference type="Gene3D" id="3.20.20.70">
    <property type="entry name" value="Aldolase class I"/>
    <property type="match status" value="1"/>
</dbReference>
<dbReference type="HAMAP" id="MF_00418">
    <property type="entry name" value="DapA"/>
    <property type="match status" value="1"/>
</dbReference>
<dbReference type="InterPro" id="IPR013785">
    <property type="entry name" value="Aldolase_TIM"/>
</dbReference>
<dbReference type="InterPro" id="IPR005263">
    <property type="entry name" value="DapA"/>
</dbReference>
<dbReference type="InterPro" id="IPR002220">
    <property type="entry name" value="DapA-like"/>
</dbReference>
<dbReference type="InterPro" id="IPR020625">
    <property type="entry name" value="Schiff_base-form_aldolases_AS"/>
</dbReference>
<dbReference type="InterPro" id="IPR020624">
    <property type="entry name" value="Schiff_base-form_aldolases_CS"/>
</dbReference>
<dbReference type="NCBIfam" id="TIGR00674">
    <property type="entry name" value="dapA"/>
    <property type="match status" value="1"/>
</dbReference>
<dbReference type="PANTHER" id="PTHR12128:SF66">
    <property type="entry name" value="4-HYDROXY-2-OXOGLUTARATE ALDOLASE, MITOCHONDRIAL"/>
    <property type="match status" value="1"/>
</dbReference>
<dbReference type="PANTHER" id="PTHR12128">
    <property type="entry name" value="DIHYDRODIPICOLINATE SYNTHASE"/>
    <property type="match status" value="1"/>
</dbReference>
<dbReference type="Pfam" id="PF00701">
    <property type="entry name" value="DHDPS"/>
    <property type="match status" value="1"/>
</dbReference>
<dbReference type="PIRSF" id="PIRSF001365">
    <property type="entry name" value="DHDPS"/>
    <property type="match status" value="1"/>
</dbReference>
<dbReference type="PRINTS" id="PR00146">
    <property type="entry name" value="DHPICSNTHASE"/>
</dbReference>
<dbReference type="SMART" id="SM01130">
    <property type="entry name" value="DHDPS"/>
    <property type="match status" value="1"/>
</dbReference>
<dbReference type="SUPFAM" id="SSF51569">
    <property type="entry name" value="Aldolase"/>
    <property type="match status" value="1"/>
</dbReference>
<dbReference type="PROSITE" id="PS00665">
    <property type="entry name" value="DHDPS_1"/>
    <property type="match status" value="1"/>
</dbReference>
<dbReference type="PROSITE" id="PS00666">
    <property type="entry name" value="DHDPS_2"/>
    <property type="match status" value="1"/>
</dbReference>
<comment type="function">
    <text evidence="1">Catalyzes the condensation of (S)-aspartate-beta-semialdehyde [(S)-ASA] and pyruvate to 4-hydroxy-tetrahydrodipicolinate (HTPA).</text>
</comment>
<comment type="catalytic activity">
    <reaction evidence="1">
        <text>L-aspartate 4-semialdehyde + pyruvate = (2S,4S)-4-hydroxy-2,3,4,5-tetrahydrodipicolinate + H2O + H(+)</text>
        <dbReference type="Rhea" id="RHEA:34171"/>
        <dbReference type="ChEBI" id="CHEBI:15361"/>
        <dbReference type="ChEBI" id="CHEBI:15377"/>
        <dbReference type="ChEBI" id="CHEBI:15378"/>
        <dbReference type="ChEBI" id="CHEBI:67139"/>
        <dbReference type="ChEBI" id="CHEBI:537519"/>
        <dbReference type="EC" id="4.3.3.7"/>
    </reaction>
</comment>
<comment type="pathway">
    <text evidence="1">Amino-acid biosynthesis; L-lysine biosynthesis via DAP pathway; (S)-tetrahydrodipicolinate from L-aspartate: step 3/4.</text>
</comment>
<comment type="subunit">
    <text evidence="1">Homotetramer; dimer of dimers.</text>
</comment>
<comment type="subcellular location">
    <subcellularLocation>
        <location evidence="1">Cytoplasm</location>
    </subcellularLocation>
</comment>
<comment type="similarity">
    <text evidence="1">Belongs to the DapA family.</text>
</comment>
<comment type="caution">
    <text evidence="2">Was originally thought to be a dihydrodipicolinate synthase (DHDPS), catalyzing the condensation of (S)-aspartate-beta-semialdehyde [(S)-ASA] and pyruvate to dihydrodipicolinate (DHDP). However, it was shown in E.coli that the product of the enzymatic reaction is not dihydrodipicolinate but in fact (4S)-4-hydroxy-2,3,4,5-tetrahydro-(2S)-dipicolinic acid (HTPA), and that the consecutive dehydration reaction leading to DHDP is not spontaneous but catalyzed by DapB.</text>
</comment>
<feature type="chain" id="PRO_0000103105" description="4-hydroxy-tetrahydrodipicolinate synthase">
    <location>
        <begin position="1"/>
        <end position="291"/>
    </location>
</feature>
<feature type="active site" description="Proton donor/acceptor" evidence="1">
    <location>
        <position position="132"/>
    </location>
</feature>
<feature type="active site" description="Schiff-base intermediate with substrate" evidence="1">
    <location>
        <position position="160"/>
    </location>
</feature>
<feature type="binding site" evidence="1">
    <location>
        <position position="44"/>
    </location>
    <ligand>
        <name>pyruvate</name>
        <dbReference type="ChEBI" id="CHEBI:15361"/>
    </ligand>
</feature>
<feature type="binding site" evidence="1">
    <location>
        <position position="202"/>
    </location>
    <ligand>
        <name>pyruvate</name>
        <dbReference type="ChEBI" id="CHEBI:15361"/>
    </ligand>
</feature>
<feature type="site" description="Part of a proton relay during catalysis" evidence="1">
    <location>
        <position position="43"/>
    </location>
</feature>
<feature type="site" description="Part of a proton relay during catalysis" evidence="1">
    <location>
        <position position="106"/>
    </location>
</feature>
<evidence type="ECO:0000255" key="1">
    <source>
        <dbReference type="HAMAP-Rule" id="MF_00418"/>
    </source>
</evidence>
<evidence type="ECO:0000305" key="2"/>
<reference key="1">
    <citation type="journal article" date="2002" name="Proc. Natl. Acad. Sci. U.S.A.">
        <title>Complete genome sequence of Clostridium perfringens, an anaerobic flesh-eater.</title>
        <authorList>
            <person name="Shimizu T."/>
            <person name="Ohtani K."/>
            <person name="Hirakawa H."/>
            <person name="Ohshima K."/>
            <person name="Yamashita A."/>
            <person name="Shiba T."/>
            <person name="Ogasawara N."/>
            <person name="Hattori M."/>
            <person name="Kuhara S."/>
            <person name="Hayashi H."/>
        </authorList>
    </citation>
    <scope>NUCLEOTIDE SEQUENCE [LARGE SCALE GENOMIC DNA]</scope>
    <source>
        <strain>13 / Type A</strain>
    </source>
</reference>